<protein>
    <recommendedName>
        <fullName evidence="1">Cytoplasmic tRNA 2-thiolation protein 1</fullName>
        <ecNumber evidence="1">2.7.7.-</ecNumber>
    </recommendedName>
    <alternativeName>
        <fullName evidence="1">Cytoplasmic tRNA adenylyltransferase 1</fullName>
    </alternativeName>
</protein>
<dbReference type="EC" id="2.7.7.-" evidence="1"/>
<dbReference type="EMBL" id="AAVQ01000001">
    <property type="protein sequence ID" value="EAZ63900.2"/>
    <property type="molecule type" value="Genomic_DNA"/>
</dbReference>
<dbReference type="SMR" id="A3GGB3"/>
<dbReference type="FunCoup" id="A3GGB3">
    <property type="interactions" value="469"/>
</dbReference>
<dbReference type="STRING" id="322104.A3GGB3"/>
<dbReference type="KEGG" id="pic:PICST_39100"/>
<dbReference type="eggNOG" id="KOG2840">
    <property type="taxonomic scope" value="Eukaryota"/>
</dbReference>
<dbReference type="HOGENOM" id="CLU_026481_1_2_1"/>
<dbReference type="InParanoid" id="A3GGB3"/>
<dbReference type="OMA" id="KPVRGIC"/>
<dbReference type="OrthoDB" id="198857at2759"/>
<dbReference type="UniPathway" id="UPA00988"/>
<dbReference type="Proteomes" id="UP000002258">
    <property type="component" value="Chromosome 1"/>
</dbReference>
<dbReference type="GO" id="GO:0005829">
    <property type="term" value="C:cytosol"/>
    <property type="evidence" value="ECO:0000250"/>
    <property type="project" value="UniProtKB"/>
</dbReference>
<dbReference type="GO" id="GO:0002144">
    <property type="term" value="C:cytosolic tRNA wobble base thiouridylase complex"/>
    <property type="evidence" value="ECO:0007669"/>
    <property type="project" value="EnsemblFungi"/>
</dbReference>
<dbReference type="GO" id="GO:0005739">
    <property type="term" value="C:mitochondrion"/>
    <property type="evidence" value="ECO:0007669"/>
    <property type="project" value="TreeGrafter"/>
</dbReference>
<dbReference type="GO" id="GO:0016779">
    <property type="term" value="F:nucleotidyltransferase activity"/>
    <property type="evidence" value="ECO:0007669"/>
    <property type="project" value="UniProtKB-UniRule"/>
</dbReference>
<dbReference type="GO" id="GO:0000049">
    <property type="term" value="F:tRNA binding"/>
    <property type="evidence" value="ECO:0000250"/>
    <property type="project" value="UniProtKB"/>
</dbReference>
<dbReference type="GO" id="GO:0103016">
    <property type="term" value="F:tRNA-uridine 2-sulfurtransferase activity"/>
    <property type="evidence" value="ECO:0007669"/>
    <property type="project" value="EnsemblFungi"/>
</dbReference>
<dbReference type="GO" id="GO:0032447">
    <property type="term" value="P:protein urmylation"/>
    <property type="evidence" value="ECO:0007669"/>
    <property type="project" value="UniProtKB-UniRule"/>
</dbReference>
<dbReference type="GO" id="GO:0034227">
    <property type="term" value="P:tRNA thio-modification"/>
    <property type="evidence" value="ECO:0000250"/>
    <property type="project" value="UniProtKB"/>
</dbReference>
<dbReference type="GO" id="GO:0002143">
    <property type="term" value="P:tRNA wobble position uridine thiolation"/>
    <property type="evidence" value="ECO:0007669"/>
    <property type="project" value="EnsemblFungi"/>
</dbReference>
<dbReference type="GO" id="GO:0002098">
    <property type="term" value="P:tRNA wobble uridine modification"/>
    <property type="evidence" value="ECO:0000250"/>
    <property type="project" value="UniProtKB"/>
</dbReference>
<dbReference type="CDD" id="cd01713">
    <property type="entry name" value="CTU1-like"/>
    <property type="match status" value="1"/>
</dbReference>
<dbReference type="FunFam" id="3.40.50.620:FF:000188">
    <property type="entry name" value="Cytoplasmic tRNA 2-thiolation protein 1"/>
    <property type="match status" value="1"/>
</dbReference>
<dbReference type="Gene3D" id="3.40.50.620">
    <property type="entry name" value="HUPs"/>
    <property type="match status" value="1"/>
</dbReference>
<dbReference type="HAMAP" id="MF_03053">
    <property type="entry name" value="CTU1"/>
    <property type="match status" value="1"/>
</dbReference>
<dbReference type="InterPro" id="IPR056369">
    <property type="entry name" value="CTU1-like_ATP-bd"/>
</dbReference>
<dbReference type="InterPro" id="IPR032442">
    <property type="entry name" value="CTU1_C"/>
</dbReference>
<dbReference type="InterPro" id="IPR000541">
    <property type="entry name" value="Ncs6/Tuc1/Ctu1"/>
</dbReference>
<dbReference type="InterPro" id="IPR014729">
    <property type="entry name" value="Rossmann-like_a/b/a_fold"/>
</dbReference>
<dbReference type="InterPro" id="IPR011063">
    <property type="entry name" value="TilS/TtcA_N"/>
</dbReference>
<dbReference type="InterPro" id="IPR035107">
    <property type="entry name" value="tRNA_thiolation_TtcA_Ctu1"/>
</dbReference>
<dbReference type="InterPro" id="IPR020554">
    <property type="entry name" value="UPF0021_CS"/>
</dbReference>
<dbReference type="PANTHER" id="PTHR11807">
    <property type="entry name" value="ATPASES OF THE PP SUPERFAMILY-RELATED"/>
    <property type="match status" value="1"/>
</dbReference>
<dbReference type="PANTHER" id="PTHR11807:SF12">
    <property type="entry name" value="CYTOPLASMIC TRNA 2-THIOLATION PROTEIN 1"/>
    <property type="match status" value="1"/>
</dbReference>
<dbReference type="Pfam" id="PF01171">
    <property type="entry name" value="ATP_bind_3"/>
    <property type="match status" value="1"/>
</dbReference>
<dbReference type="Pfam" id="PF16503">
    <property type="entry name" value="zn-ribbon_14"/>
    <property type="match status" value="1"/>
</dbReference>
<dbReference type="PIRSF" id="PIRSF004976">
    <property type="entry name" value="ATPase_YdaO"/>
    <property type="match status" value="1"/>
</dbReference>
<dbReference type="SUPFAM" id="SSF52402">
    <property type="entry name" value="Adenine nucleotide alpha hydrolases-like"/>
    <property type="match status" value="1"/>
</dbReference>
<dbReference type="PROSITE" id="PS01263">
    <property type="entry name" value="UPF0021"/>
    <property type="match status" value="1"/>
</dbReference>
<proteinExistence type="inferred from homology"/>
<keyword id="KW-0963">Cytoplasm</keyword>
<keyword id="KW-1185">Reference proteome</keyword>
<keyword id="KW-0694">RNA-binding</keyword>
<keyword id="KW-0808">Transferase</keyword>
<keyword id="KW-0819">tRNA processing</keyword>
<keyword id="KW-0820">tRNA-binding</keyword>
<evidence type="ECO:0000255" key="1">
    <source>
        <dbReference type="HAMAP-Rule" id="MF_03053"/>
    </source>
</evidence>
<sequence length="376" mass="41984">MTEISAKKVKVSALCELCHARKAVMKRPKNLQKLCKDCFYKVFETEIHNTIVDAKLFSPGDKVAIGASGGKDSTVLASVLKTLNERYDYGLILVLLSIDEGIKGYRDDSLATVKRNQVQYEMPLEIISYRDLYNWTMDEIVSCAGIRSSCTYCGVLRRQALDRGAAKLGINHVVTGHNADDMAETVLMNLLRGDTARLEKSCAIITQSAGSPIKRSKPFKYTYQKEIVLYAHYKKLDYFSTECTYAPEAFRGTARELLKSLESIRPSCIMDIIYSGEHLVLAPKKKKITTSYKTNKKKTHTENEVNADGSVSLGRKKQFEDGNRCEKCGYLSSNRICKACMLLAGLEMNRAKVSIDNNTAVDGAAVLTRTLEQLSF</sequence>
<comment type="function">
    <text evidence="1">Plays a central role in 2-thiolation of mcm(5)S(2)U at tRNA wobble positions of tRNA(Lys), tRNA(Glu) and tRNA(Gln). Directly binds tRNAs and probably acts by catalyzing adenylation of tRNAs, an intermediate required for 2-thiolation. It is unclear whether it acts as a sulfurtransferase that transfers sulfur from thiocarboxylated URM1 onto the uridine of tRNAs at wobble position. Prior mcm(5) tRNA modification by the elongator complex is required for 2-thiolation. May also be involved in protein urmylation.</text>
</comment>
<comment type="pathway">
    <text evidence="1">tRNA modification; 5-methoxycarbonylmethyl-2-thiouridine-tRNA biosynthesis.</text>
</comment>
<comment type="subcellular location">
    <subcellularLocation>
        <location evidence="1">Cytoplasm</location>
    </subcellularLocation>
</comment>
<comment type="similarity">
    <text evidence="1">Belongs to the TtcA family. CTU1/NCS6/ATPBD3 subfamily.</text>
</comment>
<gene>
    <name evidence="1" type="primary">NCS6</name>
    <name evidence="1" type="synonym">CTU1</name>
    <name type="ORF">PICST_39100</name>
</gene>
<feature type="chain" id="PRO_0000368267" description="Cytoplasmic tRNA 2-thiolation protein 1">
    <location>
        <begin position="1"/>
        <end position="376"/>
    </location>
</feature>
<reference key="1">
    <citation type="journal article" date="2007" name="Nat. Biotechnol.">
        <title>Genome sequence of the lignocellulose-bioconverting and xylose-fermenting yeast Pichia stipitis.</title>
        <authorList>
            <person name="Jeffries T.W."/>
            <person name="Grigoriev I.V."/>
            <person name="Grimwood J."/>
            <person name="Laplaza J.M."/>
            <person name="Aerts A."/>
            <person name="Salamov A."/>
            <person name="Schmutz J."/>
            <person name="Lindquist E."/>
            <person name="Dehal P."/>
            <person name="Shapiro H."/>
            <person name="Jin Y.-S."/>
            <person name="Passoth V."/>
            <person name="Richardson P.M."/>
        </authorList>
    </citation>
    <scope>NUCLEOTIDE SEQUENCE [LARGE SCALE GENOMIC DNA]</scope>
    <source>
        <strain>ATCC 58785 / CBS 6054 / NBRC 10063 / NRRL Y-11545</strain>
    </source>
</reference>
<organism>
    <name type="scientific">Scheffersomyces stipitis (strain ATCC 58785 / CBS 6054 / NBRC 10063 / NRRL Y-11545)</name>
    <name type="common">Yeast</name>
    <name type="synonym">Pichia stipitis</name>
    <dbReference type="NCBI Taxonomy" id="322104"/>
    <lineage>
        <taxon>Eukaryota</taxon>
        <taxon>Fungi</taxon>
        <taxon>Dikarya</taxon>
        <taxon>Ascomycota</taxon>
        <taxon>Saccharomycotina</taxon>
        <taxon>Pichiomycetes</taxon>
        <taxon>Debaryomycetaceae</taxon>
        <taxon>Scheffersomyces</taxon>
    </lineage>
</organism>
<name>CTU1_PICST</name>
<accession>A3GGB3</accession>